<reference key="1">
    <citation type="journal article" date="1995" name="Genomics">
        <title>CHUK, a conserved helix-loop-helix ubiquitous kinase, maps to human chromosome 10 and mouse chromosome 19.</title>
        <authorList>
            <person name="Mock B.A."/>
            <person name="Connelly M.A."/>
            <person name="McBride O.W."/>
            <person name="Kozak C.A."/>
            <person name="Marcu K.B."/>
        </authorList>
    </citation>
    <scope>NUCLEOTIDE SEQUENCE [MRNA] (ISOFORM 1)</scope>
    <source>
        <strain>BALB/cJ</strain>
    </source>
</reference>
<reference key="2">
    <citation type="journal article" date="1995" name="Cell. Mol. Biol. Res.">
        <title>CHUK, a new member of the helix-loop-helix and leucine zipper families of interacting proteins, contains a serine-threonine kinase catalytic domain.</title>
        <authorList>
            <person name="Connelly M.A."/>
            <person name="Marcu K.B."/>
        </authorList>
    </citation>
    <scope>NUCLEOTIDE SEQUENCE [MRNA] (ISOFORM 1)</scope>
    <source>
        <strain>BALB/cJ</strain>
    </source>
</reference>
<reference key="3">
    <citation type="journal article" date="2005" name="Science">
        <title>The transcriptional landscape of the mammalian genome.</title>
        <authorList>
            <person name="Carninci P."/>
            <person name="Kasukawa T."/>
            <person name="Katayama S."/>
            <person name="Gough J."/>
            <person name="Frith M.C."/>
            <person name="Maeda N."/>
            <person name="Oyama R."/>
            <person name="Ravasi T."/>
            <person name="Lenhard B."/>
            <person name="Wells C."/>
            <person name="Kodzius R."/>
            <person name="Shimokawa K."/>
            <person name="Bajic V.B."/>
            <person name="Brenner S.E."/>
            <person name="Batalov S."/>
            <person name="Forrest A.R."/>
            <person name="Zavolan M."/>
            <person name="Davis M.J."/>
            <person name="Wilming L.G."/>
            <person name="Aidinis V."/>
            <person name="Allen J.E."/>
            <person name="Ambesi-Impiombato A."/>
            <person name="Apweiler R."/>
            <person name="Aturaliya R.N."/>
            <person name="Bailey T.L."/>
            <person name="Bansal M."/>
            <person name="Baxter L."/>
            <person name="Beisel K.W."/>
            <person name="Bersano T."/>
            <person name="Bono H."/>
            <person name="Chalk A.M."/>
            <person name="Chiu K.P."/>
            <person name="Choudhary V."/>
            <person name="Christoffels A."/>
            <person name="Clutterbuck D.R."/>
            <person name="Crowe M.L."/>
            <person name="Dalla E."/>
            <person name="Dalrymple B.P."/>
            <person name="de Bono B."/>
            <person name="Della Gatta G."/>
            <person name="di Bernardo D."/>
            <person name="Down T."/>
            <person name="Engstrom P."/>
            <person name="Fagiolini M."/>
            <person name="Faulkner G."/>
            <person name="Fletcher C.F."/>
            <person name="Fukushima T."/>
            <person name="Furuno M."/>
            <person name="Futaki S."/>
            <person name="Gariboldi M."/>
            <person name="Georgii-Hemming P."/>
            <person name="Gingeras T.R."/>
            <person name="Gojobori T."/>
            <person name="Green R.E."/>
            <person name="Gustincich S."/>
            <person name="Harbers M."/>
            <person name="Hayashi Y."/>
            <person name="Hensch T.K."/>
            <person name="Hirokawa N."/>
            <person name="Hill D."/>
            <person name="Huminiecki L."/>
            <person name="Iacono M."/>
            <person name="Ikeo K."/>
            <person name="Iwama A."/>
            <person name="Ishikawa T."/>
            <person name="Jakt M."/>
            <person name="Kanapin A."/>
            <person name="Katoh M."/>
            <person name="Kawasawa Y."/>
            <person name="Kelso J."/>
            <person name="Kitamura H."/>
            <person name="Kitano H."/>
            <person name="Kollias G."/>
            <person name="Krishnan S.P."/>
            <person name="Kruger A."/>
            <person name="Kummerfeld S.K."/>
            <person name="Kurochkin I.V."/>
            <person name="Lareau L.F."/>
            <person name="Lazarevic D."/>
            <person name="Lipovich L."/>
            <person name="Liu J."/>
            <person name="Liuni S."/>
            <person name="McWilliam S."/>
            <person name="Madan Babu M."/>
            <person name="Madera M."/>
            <person name="Marchionni L."/>
            <person name="Matsuda H."/>
            <person name="Matsuzawa S."/>
            <person name="Miki H."/>
            <person name="Mignone F."/>
            <person name="Miyake S."/>
            <person name="Morris K."/>
            <person name="Mottagui-Tabar S."/>
            <person name="Mulder N."/>
            <person name="Nakano N."/>
            <person name="Nakauchi H."/>
            <person name="Ng P."/>
            <person name="Nilsson R."/>
            <person name="Nishiguchi S."/>
            <person name="Nishikawa S."/>
            <person name="Nori F."/>
            <person name="Ohara O."/>
            <person name="Okazaki Y."/>
            <person name="Orlando V."/>
            <person name="Pang K.C."/>
            <person name="Pavan W.J."/>
            <person name="Pavesi G."/>
            <person name="Pesole G."/>
            <person name="Petrovsky N."/>
            <person name="Piazza S."/>
            <person name="Reed J."/>
            <person name="Reid J.F."/>
            <person name="Ring B.Z."/>
            <person name="Ringwald M."/>
            <person name="Rost B."/>
            <person name="Ruan Y."/>
            <person name="Salzberg S.L."/>
            <person name="Sandelin A."/>
            <person name="Schneider C."/>
            <person name="Schoenbach C."/>
            <person name="Sekiguchi K."/>
            <person name="Semple C.A."/>
            <person name="Seno S."/>
            <person name="Sessa L."/>
            <person name="Sheng Y."/>
            <person name="Shibata Y."/>
            <person name="Shimada H."/>
            <person name="Shimada K."/>
            <person name="Silva D."/>
            <person name="Sinclair B."/>
            <person name="Sperling S."/>
            <person name="Stupka E."/>
            <person name="Sugiura K."/>
            <person name="Sultana R."/>
            <person name="Takenaka Y."/>
            <person name="Taki K."/>
            <person name="Tammoja K."/>
            <person name="Tan S.L."/>
            <person name="Tang S."/>
            <person name="Taylor M.S."/>
            <person name="Tegner J."/>
            <person name="Teichmann S.A."/>
            <person name="Ueda H.R."/>
            <person name="van Nimwegen E."/>
            <person name="Verardo R."/>
            <person name="Wei C.L."/>
            <person name="Yagi K."/>
            <person name="Yamanishi H."/>
            <person name="Zabarovsky E."/>
            <person name="Zhu S."/>
            <person name="Zimmer A."/>
            <person name="Hide W."/>
            <person name="Bult C."/>
            <person name="Grimmond S.M."/>
            <person name="Teasdale R.D."/>
            <person name="Liu E.T."/>
            <person name="Brusic V."/>
            <person name="Quackenbush J."/>
            <person name="Wahlestedt C."/>
            <person name="Mattick J.S."/>
            <person name="Hume D.A."/>
            <person name="Kai C."/>
            <person name="Sasaki D."/>
            <person name="Tomaru Y."/>
            <person name="Fukuda S."/>
            <person name="Kanamori-Katayama M."/>
            <person name="Suzuki M."/>
            <person name="Aoki J."/>
            <person name="Arakawa T."/>
            <person name="Iida J."/>
            <person name="Imamura K."/>
            <person name="Itoh M."/>
            <person name="Kato T."/>
            <person name="Kawaji H."/>
            <person name="Kawagashira N."/>
            <person name="Kawashima T."/>
            <person name="Kojima M."/>
            <person name="Kondo S."/>
            <person name="Konno H."/>
            <person name="Nakano K."/>
            <person name="Ninomiya N."/>
            <person name="Nishio T."/>
            <person name="Okada M."/>
            <person name="Plessy C."/>
            <person name="Shibata K."/>
            <person name="Shiraki T."/>
            <person name="Suzuki S."/>
            <person name="Tagami M."/>
            <person name="Waki K."/>
            <person name="Watahiki A."/>
            <person name="Okamura-Oho Y."/>
            <person name="Suzuki H."/>
            <person name="Kawai J."/>
            <person name="Hayashizaki Y."/>
        </authorList>
    </citation>
    <scope>NUCLEOTIDE SEQUENCE [LARGE SCALE MRNA] (ISOFORM 3)</scope>
    <source>
        <strain>C57BL/6J</strain>
        <tissue>Colon</tissue>
    </source>
</reference>
<reference key="4">
    <citation type="journal article" date="2004" name="Genome Res.">
        <title>The status, quality, and expansion of the NIH full-length cDNA project: the Mammalian Gene Collection (MGC).</title>
        <authorList>
            <consortium name="The MGC Project Team"/>
        </authorList>
    </citation>
    <scope>NUCLEOTIDE SEQUENCE [LARGE SCALE MRNA] (ISOFORM 3)</scope>
    <source>
        <tissue>Eye</tissue>
    </source>
</reference>
<reference key="5">
    <citation type="journal article" date="1999" name="Science">
        <title>Limb and skin abnormalities in mice lacking IKKalpha.</title>
        <authorList>
            <person name="Takeda K."/>
            <person name="Takeuchi O."/>
            <person name="Tsujimura T."/>
            <person name="Itami S."/>
            <person name="Adachi O."/>
            <person name="Kawai T."/>
            <person name="Sanjo H."/>
            <person name="Yoshikawa K."/>
            <person name="Terada N."/>
            <person name="Akira S."/>
        </authorList>
    </citation>
    <scope>DISRUPTION PHENOTYPE</scope>
</reference>
<reference key="6">
    <citation type="journal article" date="2000" name="Mol. Cell. Biol.">
        <title>Functional isoforms of IkappaB kinase alpha (IKKalpha) lacking leucine zipper and helix-loop-helix domains reveal that IKKalpha and IKKbeta have different activation requirements.</title>
        <authorList>
            <person name="McKenzie F.R."/>
            <person name="Connelly M.A."/>
            <person name="Balzarano D."/>
            <person name="Mueller J.R."/>
            <person name="Geleziunas R."/>
            <person name="Marcu K.B."/>
        </authorList>
    </citation>
    <scope>ALTERNATIVE SPLICING</scope>
</reference>
<reference key="7">
    <citation type="journal article" date="1998" name="Proc. Natl. Acad. Sci. U.S.A.">
        <title>Differential regulation of IkappaB kinase alpha and beta by two upstream kinases, NF-kappaB-inducing kinase and mitogen-activated protein kinase/ERK kinase kinase-1.</title>
        <authorList>
            <person name="Nakano H."/>
            <person name="Shindo M."/>
            <person name="Sakon S."/>
            <person name="Nishinaka S."/>
            <person name="Mihara M."/>
            <person name="Yagita H."/>
            <person name="Okumura K."/>
        </authorList>
    </citation>
    <scope>PHOSPHORYLATION BY MAP3K14/NIK</scope>
</reference>
<reference key="8">
    <citation type="journal article" date="1999" name="Science">
        <title>Positive and negative regulation of IkappaB kinase activity through IKKbeta subunit phosphorylation.</title>
        <authorList>
            <person name="Delhase M."/>
            <person name="Hayakawa M."/>
            <person name="Chen Y."/>
            <person name="Karin M."/>
        </authorList>
    </citation>
    <scope>INTERACTION WITH IKBKB</scope>
</reference>
<reference key="9">
    <citation type="journal article" date="1998" name="Mol. Cell. Biol.">
        <title>Coordinate regulation of IkappaB kinases by mitogen-activated protein kinase kinase kinase 1 and NF-kappaB-inducing kinase.</title>
        <authorList>
            <person name="Nemoto S."/>
            <person name="DiDonato J.A."/>
            <person name="Lin A."/>
        </authorList>
    </citation>
    <scope>IKK PHOSPHORYLATION</scope>
</reference>
<reference key="10">
    <citation type="journal article" date="2000" name="Am. J. Physiol.">
        <title>The I kappa B/NF-kappa B system: a key determinant of mucosal inflammation and protection.</title>
        <authorList>
            <person name="Jobin C."/>
            <person name="Sartor R.B."/>
        </authorList>
    </citation>
    <scope>REVIEW</scope>
</reference>
<reference key="11">
    <citation type="journal article" date="2003" name="Mol. Cell. Biol.">
        <title>TRUSS, a novel tumor necrosis factor receptor 1 scaffolding protein that mediates activation of the transcription factor NF-kappaB.</title>
        <authorList>
            <person name="Soond S.M."/>
            <person name="Terry J.L."/>
            <person name="Colbert J.D."/>
            <person name="Riches D.W.H."/>
        </authorList>
    </citation>
    <scope>INTERACTION WITH TRPC4AP</scope>
</reference>
<reference key="12">
    <citation type="journal article" date="2003" name="Nature">
        <title>Histone H3 phosphorylation by IKK-alpha is critical for cytokine-induced gene expression.</title>
        <authorList>
            <person name="Yamamoto Y."/>
            <person name="Verma U.N."/>
            <person name="Prajapati S."/>
            <person name="Kwak Y.T."/>
            <person name="Gaynor R.B."/>
        </authorList>
    </citation>
    <scope>FUNCTION</scope>
    <scope>SUBCELLULAR LOCATION</scope>
</reference>
<reference key="13">
    <citation type="journal article" date="2008" name="Immunology">
        <title>Beta2-adrenergic receptor regulates Toll-like receptor-4-induced nuclear factor-kappaB activation through beta-arrestin 2.</title>
        <authorList>
            <person name="Kizaki T."/>
            <person name="Izawa T."/>
            <person name="Sakurai T."/>
            <person name="Haga S."/>
            <person name="Taniguchi N."/>
            <person name="Tajiri H."/>
            <person name="Watanabe K."/>
            <person name="Day N.K."/>
            <person name="Toba K."/>
            <person name="Ohno H."/>
        </authorList>
    </citation>
    <scope>INTERACTION WITH ARRB2</scope>
</reference>
<reference key="14">
    <citation type="journal article" date="2010" name="Cell">
        <title>A tissue-specific atlas of mouse protein phosphorylation and expression.</title>
        <authorList>
            <person name="Huttlin E.L."/>
            <person name="Jedrychowski M.P."/>
            <person name="Elias J.E."/>
            <person name="Goswami T."/>
            <person name="Rad R."/>
            <person name="Beausoleil S.A."/>
            <person name="Villen J."/>
            <person name="Haas W."/>
            <person name="Sowa M.E."/>
            <person name="Gygi S.P."/>
        </authorList>
    </citation>
    <scope>IDENTIFICATION BY MASS SPECTROMETRY [LARGE SCALE ANALYSIS]</scope>
    <source>
        <tissue>Liver</tissue>
        <tissue>Spleen</tissue>
        <tissue>Testis</tissue>
    </source>
</reference>
<reference key="15">
    <citation type="journal article" date="2010" name="Nat. Cell Biol.">
        <title>Telomere-independent Rap1 is an IKK adaptor and regulates NF-kappaB-dependent gene expression.</title>
        <authorList>
            <person name="Teo H."/>
            <person name="Ghosh S."/>
            <person name="Luesch H."/>
            <person name="Ghosh A."/>
            <person name="Wong E.T."/>
            <person name="Malik N."/>
            <person name="Orth A."/>
            <person name="de Jesus P."/>
            <person name="Perry A.S."/>
            <person name="Oliver J.D."/>
            <person name="Tran N.L."/>
            <person name="Speiser L.J."/>
            <person name="Wong M."/>
            <person name="Saez E."/>
            <person name="Schultz P."/>
            <person name="Chanda S.K."/>
            <person name="Verma I.M."/>
            <person name="Tergaonkar V."/>
        </authorList>
    </citation>
    <scope>INTERACTION WITH TERF2IP</scope>
</reference>
<reference key="16">
    <citation type="journal article" date="2019" name="Nat. Commun.">
        <title>Serine 25 phosphorylation inhibits RIPK1 kinase-dependent cell death in models of infection and inflammation.</title>
        <authorList>
            <person name="Dondelinger Y."/>
            <person name="Delanghe T."/>
            <person name="Priem D."/>
            <person name="Wynosky-Dolfi M.A."/>
            <person name="Sorobetea D."/>
            <person name="Rojas-Rivera D."/>
            <person name="Giansanti P."/>
            <person name="Roelandt R."/>
            <person name="Gropengiesser J."/>
            <person name="Ruckdeschel K."/>
            <person name="Savvides S.N."/>
            <person name="Heck A.J.R."/>
            <person name="Vandenabeele P."/>
            <person name="Brodsky I.E."/>
            <person name="Bertrand M.J.M."/>
        </authorList>
    </citation>
    <scope>FUNCTION</scope>
</reference>
<sequence length="745" mass="84729">MERPPGLRPGAGGPWEMRERLGTGGFGNVSLYQHRELDLKIAIKSCRLELSSKNRERWCHEIQIMKKLDHANVVKACDVPEELNFLINDVPLLAMEYCSGGDLRKLLNKPENCCGLKESQILSLLSDIGSGIRYLHENKIIHRDLKPENIVLQDVGGKTIHKIIDLGYAKDVDQGSLCTSFVGTLQYLAPELFENKPYTATVDYWSFGTMVFECIAGYRPFLHHLQPFTWHEKIKKKDPKCIFACEEMTGEVRFSSHLPQPNSLCSLIVEPMESWLQLMLNWDPQQRGGPIDLTLKQPRCFALMDHILNLKIVHILNMTSAKIISFLLPCDESLHSLQSRIERETGINTGSQELLSETGISLDPRKPASQCVLDGVRGCDSYMVYLFDKSKTVYEGPFASRSLSDCVNYIVQDSKIQLPIIQLRKVWAEAVHYVSGLKEDYSRLFQGQRAAMLSLLRYNANLTKMKNTLISASQQLKAKLEFFRKSIQLDLERYSEQMTYGISSEKMLKAWKEMEEKAIHYSEVGVIGYLEDQIMSLHTEIMELQKSPYGRRQGDLMESLEQRAIDLYKQLKHRPPDHLYSDSTEMVKIIVHTVQSQDRVLKELFGHLSKLLGCKQKIIDLLPKVEVALSNIKEADNTVMFMQGKRQKEIWHLLKIACTQSSARSLVGSSLEGTVTPPVSAWLPPTLADREHPLTCVVTPQDGETLAQMIEENLNCLGHLSTIIREANEDQSSSLMSLDWSWLAE</sequence>
<name>IKKA_MOUSE</name>
<gene>
    <name type="primary">Chuk</name>
    <name type="synonym">Ikka</name>
</gene>
<feature type="chain" id="PRO_0000086012" description="Inhibitor of nuclear factor kappa-B kinase subunit alpha">
    <location>
        <begin position="1"/>
        <end position="745"/>
    </location>
</feature>
<feature type="domain" description="Protein kinase" evidence="2">
    <location>
        <begin position="15"/>
        <end position="300"/>
    </location>
</feature>
<feature type="region of interest" description="Leucine-zipper">
    <location>
        <begin position="455"/>
        <end position="476"/>
    </location>
</feature>
<feature type="region of interest" description="NEMO-binding">
    <location>
        <begin position="738"/>
        <end position="743"/>
    </location>
</feature>
<feature type="active site" description="Proton acceptor" evidence="2 3">
    <location>
        <position position="144"/>
    </location>
</feature>
<feature type="binding site" evidence="2">
    <location>
        <begin position="21"/>
        <end position="29"/>
    </location>
    <ligand>
        <name>ATP</name>
        <dbReference type="ChEBI" id="CHEBI:30616"/>
    </ligand>
</feature>
<feature type="binding site" evidence="2">
    <location>
        <position position="44"/>
    </location>
    <ligand>
        <name>ATP</name>
        <dbReference type="ChEBI" id="CHEBI:30616"/>
    </ligand>
</feature>
<feature type="modified residue" description="Phosphothreonine; by PKB/AKT1 and SGK1" evidence="1">
    <location>
        <position position="23"/>
    </location>
</feature>
<feature type="modified residue" description="Phosphoserine; by MAP3K14" evidence="1">
    <location>
        <position position="176"/>
    </location>
</feature>
<feature type="modified residue" description="Phosphoserine; by SGK1" evidence="1">
    <location>
        <position position="180"/>
    </location>
</feature>
<feature type="splice variant" id="VSP_004866" description="In isoform 2." evidence="14">
    <original>MLSLLRYNANLTKMKNTLIS</original>
    <variation>IFRKNVKSMERNGRKGHSLF</variation>
    <location>
        <begin position="452"/>
        <end position="471"/>
    </location>
</feature>
<feature type="splice variant" id="VSP_004867" description="In isoform 2." evidence="14">
    <location>
        <begin position="472"/>
        <end position="745"/>
    </location>
</feature>
<feature type="splice variant" id="VSP_004868" description="In isoform 3." evidence="12 13">
    <original>DHLYSDST</original>
    <variation>GKTLQSQY</variation>
    <location>
        <begin position="577"/>
        <end position="584"/>
    </location>
</feature>
<feature type="splice variant" id="VSP_004869" description="In isoform 3." evidence="12 13">
    <location>
        <begin position="585"/>
        <end position="745"/>
    </location>
</feature>
<feature type="sequence conflict" description="In Ref. 3; BAB31335." evidence="14" ref="3">
    <original>K</original>
    <variation>E</variation>
    <location>
        <position position="236"/>
    </location>
</feature>
<feature type="sequence conflict" description="In Ref. 3; BAB31335." evidence="14" ref="3">
    <original>S</original>
    <variation>Y</variation>
    <location>
        <position position="400"/>
    </location>
</feature>
<comment type="function">
    <text evidence="1 6 10">Serine kinase that plays an essential role in the NF-kappa-B signaling pathway which is activated by multiple stimuli such as inflammatory cytokines, bacterial or viral products, DNA damages or other cellular stresses. Acts as a part of the canonical IKK complex in the conventional pathway of NF-kappa-B activation and phosphorylates inhibitors of NF-kappa-B on serine residues. These modifications allow polyubiquitination of the inhibitors and subsequent degradation by the proteasome. In turn, free NF-kappa-B is translocated into the nucleus and activates the transcription of hundreds of genes involved in immune response, growth control, or protection against apoptosis. Negatively regulates the pathway by phosphorylating the scaffold protein TAXBP1 and thus promoting the assembly of the A20/TNFAIP3 ubiquitin-editing complex (composed of A20/TNFAIP3, TAX1BP1, and the E3 ligases ITCH and RNF11). Therefore, CHUK plays a key role in the negative feedback of NF-kappa-B canonical signaling to limit inflammatory gene activation. As part of the non-canonical pathway of NF-kappa-B activation, the MAP3K14-activated CHUK/IKKA homodimer phosphorylates NFKB2/p100 associated with RelB, inducing its proteolytic processing to NFKB2/p52 and the formation of NF-kappa-B RelB-p52 complexes. In turn, these complexes regulate genes encoding molecules involved in B-cell survival and lymphoid organogenesis. Also participates in the negative feedback of the non-canonical NF-kappa-B signaling pathway by phosphorylating and destabilizing MAP3K14/NIK. Within the nucleus, phosphorylates CREBBP and consequently increases both its transcriptional and histone acetyltransferase activities. Modulates chromatin accessibility at NF-kappa-B-responsive promoters by phosphorylating histones H3 at 'Ser-10' that are subsequently acetylated at 'Lys-14' by CREBBP (PubMed:12789342). Additionally, phosphorylates the CREBBP-interacting protein NCOA3. Also phosphorylates FOXO3 and may regulate this pro-apoptotic transcription factor. Phosphorylates RIPK1 at 'Ser-25' which represses its kinase activity and consequently prevents TNF-mediated RIPK1-dependent cell death (PubMed:30988283). Phosphorylates AMBRA1 following mitophagy induction, promoting AMBRA1 interaction with ATG8 family proteins and its mitophagic activity (By similarity).</text>
</comment>
<comment type="catalytic activity">
    <reaction evidence="1">
        <text>L-seryl-[I-kappa-B protein] + ATP = O-phospho-L-seryl-[I-kappa-B protein] + ADP + H(+)</text>
        <dbReference type="Rhea" id="RHEA:19073"/>
        <dbReference type="Rhea" id="RHEA-COMP:13698"/>
        <dbReference type="Rhea" id="RHEA-COMP:13699"/>
        <dbReference type="ChEBI" id="CHEBI:15378"/>
        <dbReference type="ChEBI" id="CHEBI:29999"/>
        <dbReference type="ChEBI" id="CHEBI:30616"/>
        <dbReference type="ChEBI" id="CHEBI:83421"/>
        <dbReference type="ChEBI" id="CHEBI:456216"/>
        <dbReference type="EC" id="2.7.11.10"/>
    </reaction>
</comment>
<comment type="activity regulation">
    <text>Activated when phosphorylated and inactivated when dephosphorylated.</text>
</comment>
<comment type="subunit">
    <text evidence="1 4 7 8 9">Component of the I-kappa-B-kinase (IKK) core complex consisting of CHUK, IKBKB and IKBKG; probably four alpha/CHUK-beta/IKBKB dimers are associated with four gamma/IKBKG subunits. The IKK core complex seems to associate with regulatory or adapter proteins to form a IKK-signalosome holo-complex (PubMed:10195894). The IKK complex associates with TERF2IP/RAP1, leading to promote IKK-mediated phosphorylation of RELA/p65 (PubMed:20622870). Part of a complex composed of NCOA2, NCOA3, CHUK/IKKA, IKBKB, IKBKG and CREBBP. Part of a 70-90 kDa complex at least consisting of CHUK/IKKA, IKBKB, NFKBIA, RELA, ELP1 and MAP3K14 (By similarity). Directly interacts with TRPC4AP (PubMed:14585990). May interact with TRAF2. Interacts with NALP2. May interact with MAVS/IPS1 (By similarity). Interacts with ARRB1 and ARRB2 (PubMed:18194271). Interacts with NLRC5; prevents CHUK phosphorylation and kinase activity. Interacts with PIAS1; this interaction induces PIAS1 phosphorylation. Interacts with ZNF268 isoform 2; the interaction is further increased in a TNF-alpha-dependent manner (By similarity). Interacts with LRRC14 (By similarity). Interacts with SASH1 (By similarity). Directly interacts with DDX3X after the physiological activation of the TLR7 and TLR8 pathways; this interaction enhances CHUK autophosphorylation (By similarity).</text>
</comment>
<comment type="interaction">
    <interactant intactId="EBI-646245">
        <id>Q60680</id>
    </interactant>
    <interactant intactId="EBI-447960">
        <id>O88351</id>
        <label>Ikbkb</label>
    </interactant>
    <organismsDiffer>false</organismsDiffer>
    <experiments>4</experiments>
</comment>
<comment type="interaction">
    <interactant intactId="EBI-646245">
        <id>Q60680</id>
    </interactant>
    <interactant intactId="EBI-998011">
        <id>O88522</id>
        <label>Ikbkg</label>
    </interactant>
    <organismsDiffer>false</organismsDiffer>
    <experiments>6</experiments>
</comment>
<comment type="interaction">
    <interactant intactId="EBI-646245">
        <id>Q60680</id>
    </interactant>
    <interactant intactId="EBI-997907">
        <id>P70434</id>
        <label>Irf7</label>
    </interactant>
    <organismsDiffer>false</organismsDiffer>
    <experiments>3</experiments>
</comment>
<comment type="interaction">
    <interactant intactId="EBI-646245">
        <id>Q60680</id>
    </interactant>
    <interactant intactId="EBI-6149376">
        <id>Q77M19</id>
        <label>P</label>
    </interactant>
    <organismsDiffer>true</organismsDiffer>
    <experiments>3</experiments>
</comment>
<comment type="interaction">
    <interactant intactId="EBI-646245">
        <id>Q60680</id>
    </interactant>
    <interactant intactId="EBI-8848010">
        <id>P04862</id>
        <label>P/V/C</label>
    </interactant>
    <organismsDiffer>true</organismsDiffer>
    <experiments>2</experiments>
</comment>
<comment type="interaction">
    <interactant intactId="EBI-646245">
        <id>Q60680</id>
    </interactant>
    <interactant intactId="EBI-8848117">
        <id>P06164</id>
        <label>P/V/C</label>
    </interactant>
    <organismsDiffer>true</organismsDiffer>
    <experiments>2</experiments>
</comment>
<comment type="interaction">
    <interactant intactId="EBI-646245">
        <id>Q60680</id>
    </interactant>
    <interactant intactId="EBI-6151115">
        <id>P0C1C7</id>
        <label>P/V/C</label>
    </interactant>
    <organismsDiffer>true</organismsDiffer>
    <experiments>2</experiments>
</comment>
<comment type="interaction">
    <interactant intactId="EBI-646245">
        <id>Q60680</id>
    </interactant>
    <interactant intactId="EBI-8848155">
        <id>P35977</id>
        <label>P/V/C</label>
    </interactant>
    <organismsDiffer>true</organismsDiffer>
    <experiments>2</experiments>
</comment>
<comment type="interaction">
    <interactant intactId="EBI-646260">
        <id>Q60680-1</id>
    </interactant>
    <interactant intactId="EBI-646638">
        <id>Q8BP22</id>
        <label>Cibar1</label>
    </interactant>
    <organismsDiffer>false</organismsDiffer>
    <experiments>4</experiments>
</comment>
<comment type="interaction">
    <interactant intactId="EBI-646260">
        <id>Q60680-1</id>
    </interactant>
    <interactant intactId="EBI-646288">
        <id>P02535</id>
        <label>Krt10</label>
    </interactant>
    <organismsDiffer>false</organismsDiffer>
    <experiments>6</experiments>
</comment>
<comment type="interaction">
    <interactant intactId="EBI-646260">
        <id>Q60680-1</id>
    </interactant>
    <interactant intactId="EBI-659248">
        <id>B7ZNY0</id>
        <label>Pde4dip</label>
    </interactant>
    <organismsDiffer>false</organismsDiffer>
    <experiments>4</experiments>
</comment>
<comment type="interaction">
    <interactant intactId="EBI-646264">
        <id>Q60680-2</id>
    </interactant>
    <interactant intactId="EBI-358011">
        <id>Q99558</id>
        <label>MAP3K14</label>
    </interactant>
    <organismsDiffer>true</organismsDiffer>
    <experiments>3</experiments>
</comment>
<comment type="interaction">
    <interactant intactId="EBI-646264">
        <id>Q60680-2</id>
    </interactant>
    <interactant intactId="EBI-307386">
        <id>P25963</id>
        <label>NFKBIA</label>
    </interactant>
    <organismsDiffer>true</organismsDiffer>
    <experiments>2</experiments>
</comment>
<comment type="subcellular location">
    <subcellularLocation>
        <location evidence="6">Cytoplasm</location>
    </subcellularLocation>
    <subcellularLocation>
        <location evidence="6">Nucleus</location>
    </subcellularLocation>
    <text>Shuttles between the cytoplasm and the nucleus.</text>
</comment>
<comment type="alternative products">
    <event type="alternative splicing"/>
    <isoform>
        <id>Q60680-1</id>
        <name>1</name>
        <sequence type="displayed"/>
    </isoform>
    <isoform>
        <id>Q60680-2</id>
        <name>2</name>
        <name>Delta LH</name>
        <sequence type="described" ref="VSP_004866 VSP_004867"/>
    </isoform>
    <isoform>
        <id>Q60680-3</id>
        <name>3</name>
        <name>Delta H</name>
        <sequence type="described" ref="VSP_004868 VSP_004869"/>
    </isoform>
</comment>
<comment type="tissue specificity">
    <text>Ubiquitous only for isoform 1, isoforms 2 and 3 are expressed predominantly in brain and T-lymphocytes.</text>
</comment>
<comment type="developmental stage">
    <text>Maximally expressed at 7 dpc followed by 11 dpc, 15 dpc and 17 dpc. In the limb development, its expression predominates in the limb buds at 12.5 dpc.</text>
</comment>
<comment type="domain">
    <text>The kinase domain is located in the N-terminal region. The leucine zipper is important to allow homo- and hetero-dimerization. At the C-terminal region is located the region responsible for the interaction with NEMO/IKBKG.</text>
</comment>
<comment type="PTM">
    <text evidence="1">Ubiquitinated by TRIM56 via 'Lys-63'-linked ubiquitination, promoting activation of CHUK/IKKA.</text>
</comment>
<comment type="PTM">
    <text evidence="11">Phosphorylated by MAP3K14/NIK, AKT and to a lesser extent by MEKK1, and dephosphorylated by PP2A. Autophosphorylated.</text>
</comment>
<comment type="disruption phenotype">
    <text evidence="5">Mice show abnormal appearance and die within 4 hours after birth. The epidermal cells are highly proliferative with dysregulated epidermal differentiation.</text>
</comment>
<comment type="similarity">
    <text evidence="2">Belongs to the protein kinase superfamily. Ser/Thr protein kinase family. I-kappa-B kinase subfamily.</text>
</comment>
<accession>Q60680</accession>
<accession>Q80VU2</accession>
<accession>Q9D2X3</accession>
<organism>
    <name type="scientific">Mus musculus</name>
    <name type="common">Mouse</name>
    <dbReference type="NCBI Taxonomy" id="10090"/>
    <lineage>
        <taxon>Eukaryota</taxon>
        <taxon>Metazoa</taxon>
        <taxon>Chordata</taxon>
        <taxon>Craniata</taxon>
        <taxon>Vertebrata</taxon>
        <taxon>Euteleostomi</taxon>
        <taxon>Mammalia</taxon>
        <taxon>Eutheria</taxon>
        <taxon>Euarchontoglires</taxon>
        <taxon>Glires</taxon>
        <taxon>Rodentia</taxon>
        <taxon>Myomorpha</taxon>
        <taxon>Muroidea</taxon>
        <taxon>Muridae</taxon>
        <taxon>Murinae</taxon>
        <taxon>Mus</taxon>
        <taxon>Mus</taxon>
    </lineage>
</organism>
<dbReference type="EC" id="2.7.11.10" evidence="1"/>
<dbReference type="EMBL" id="U12473">
    <property type="protein sequence ID" value="AAC52589.1"/>
    <property type="molecule type" value="mRNA"/>
</dbReference>
<dbReference type="EMBL" id="AK018671">
    <property type="protein sequence ID" value="BAB31335.1"/>
    <property type="molecule type" value="mRNA"/>
</dbReference>
<dbReference type="EMBL" id="BC018243">
    <property type="protein sequence ID" value="AAH18243.1"/>
    <property type="molecule type" value="mRNA"/>
</dbReference>
<dbReference type="CCDS" id="CCDS29843.1">
    <molecule id="Q60680-1"/>
</dbReference>
<dbReference type="PIR" id="I49101">
    <property type="entry name" value="I49101"/>
</dbReference>
<dbReference type="SMR" id="Q60680"/>
<dbReference type="BioGRID" id="198709">
    <property type="interactions" value="29"/>
</dbReference>
<dbReference type="ComplexPortal" id="CPX-3270">
    <property type="entry name" value="IkappaB kinase complex"/>
</dbReference>
<dbReference type="CORUM" id="Q60680"/>
<dbReference type="DIP" id="DIP-29719N"/>
<dbReference type="FunCoup" id="Q60680">
    <property type="interactions" value="2166"/>
</dbReference>
<dbReference type="IntAct" id="Q60680">
    <property type="interactions" value="33"/>
</dbReference>
<dbReference type="MINT" id="Q60680"/>
<dbReference type="STRING" id="10090.ENSMUSP00000026217"/>
<dbReference type="ChEMBL" id="CHEMBL5380"/>
<dbReference type="GlyGen" id="Q60680">
    <property type="glycosylation" value="1 site"/>
</dbReference>
<dbReference type="iPTMnet" id="Q60680"/>
<dbReference type="PhosphoSitePlus" id="Q60680"/>
<dbReference type="jPOST" id="Q60680"/>
<dbReference type="PaxDb" id="10090-ENSMUSP00000026217"/>
<dbReference type="PeptideAtlas" id="Q60680"/>
<dbReference type="ProteomicsDB" id="267113">
    <molecule id="Q60680-1"/>
</dbReference>
<dbReference type="ProteomicsDB" id="267114">
    <molecule id="Q60680-2"/>
</dbReference>
<dbReference type="ProteomicsDB" id="267115">
    <molecule id="Q60680-3"/>
</dbReference>
<dbReference type="Pumba" id="Q60680"/>
<dbReference type="UCSC" id="uc008hpi.2">
    <molecule id="Q60680-3"/>
    <property type="organism name" value="mouse"/>
</dbReference>
<dbReference type="AGR" id="MGI:99484"/>
<dbReference type="MGI" id="MGI:99484">
    <property type="gene designation" value="Chuk"/>
</dbReference>
<dbReference type="eggNOG" id="KOG4250">
    <property type="taxonomic scope" value="Eukaryota"/>
</dbReference>
<dbReference type="InParanoid" id="Q60680"/>
<dbReference type="PhylomeDB" id="Q60680"/>
<dbReference type="BRENDA" id="2.7.11.10">
    <property type="organism ID" value="3474"/>
</dbReference>
<dbReference type="Reactome" id="R-MMU-1169091">
    <property type="pathway name" value="Activation of NF-kappaB in B cells"/>
</dbReference>
<dbReference type="Reactome" id="R-MMU-1810476">
    <property type="pathway name" value="RIP-mediated NFkB activation via ZBP1"/>
</dbReference>
<dbReference type="Reactome" id="R-MMU-198323">
    <property type="pathway name" value="AKT phosphorylates targets in the cytosol"/>
</dbReference>
<dbReference type="Reactome" id="R-MMU-202424">
    <property type="pathway name" value="Downstream TCR signaling"/>
</dbReference>
<dbReference type="Reactome" id="R-MMU-2871837">
    <property type="pathway name" value="FCERI mediated NF-kB activation"/>
</dbReference>
<dbReference type="Reactome" id="R-MMU-445989">
    <property type="pathway name" value="TAK1-dependent IKK and NF-kappa-B activation"/>
</dbReference>
<dbReference type="Reactome" id="R-MMU-5357905">
    <property type="pathway name" value="Regulation of TNFR1 signaling"/>
</dbReference>
<dbReference type="Reactome" id="R-MMU-5357956">
    <property type="pathway name" value="TNFR1-induced NF-kappa-B signaling pathway"/>
</dbReference>
<dbReference type="Reactome" id="R-MMU-5607761">
    <property type="pathway name" value="Dectin-1 mediated noncanonical NF-kB signaling"/>
</dbReference>
<dbReference type="Reactome" id="R-MMU-5607764">
    <property type="pathway name" value="CLEC7A (Dectin-1) signaling"/>
</dbReference>
<dbReference type="Reactome" id="R-MMU-5676590">
    <property type="pathway name" value="NIK--&gt;noncanonical NF-kB signaling"/>
</dbReference>
<dbReference type="Reactome" id="R-MMU-5684264">
    <property type="pathway name" value="MAP3K8 (TPL2)-dependent MAPK1/3 activation"/>
</dbReference>
<dbReference type="Reactome" id="R-MMU-9020702">
    <property type="pathway name" value="Interleukin-1 signaling"/>
</dbReference>
<dbReference type="Reactome" id="R-MMU-933542">
    <property type="pathway name" value="TRAF6 mediated NF-kB activation"/>
</dbReference>
<dbReference type="Reactome" id="R-MMU-937039">
    <property type="pathway name" value="IRAK1 recruits IKK complex"/>
</dbReference>
<dbReference type="Reactome" id="R-MMU-937041">
    <property type="pathway name" value="IKK complex recruitment mediated by RIP1"/>
</dbReference>
<dbReference type="Reactome" id="R-MMU-975144">
    <property type="pathway name" value="IRAK1 recruits IKK complex upon TLR7/8 or 9 stimulation"/>
</dbReference>
<dbReference type="Reactome" id="R-MMU-9758274">
    <property type="pathway name" value="Regulation of NF-kappa B signaling"/>
</dbReference>
<dbReference type="Reactome" id="R-MMU-9833482">
    <property type="pathway name" value="PKR-mediated signaling"/>
</dbReference>
<dbReference type="Reactome" id="R-MMU-9860276">
    <property type="pathway name" value="SLC15A4:TASL-dependent IRF5 activation"/>
</dbReference>
<dbReference type="Reactome" id="R-MMU-9860927">
    <property type="pathway name" value="Turbulent (oscillatory, disturbed) flow shear stress activates signaling by PIEZO1 and integrins in endothelial cells"/>
</dbReference>
<dbReference type="Reactome" id="R-MMU-9909505">
    <property type="pathway name" value="Modulation of host responses by IFN-stimulated genes"/>
</dbReference>
<dbReference type="ChiTaRS" id="Chuk">
    <property type="organism name" value="mouse"/>
</dbReference>
<dbReference type="PRO" id="PR:Q60680"/>
<dbReference type="Proteomes" id="UP000000589">
    <property type="component" value="Unplaced"/>
</dbReference>
<dbReference type="RNAct" id="Q60680">
    <property type="molecule type" value="protein"/>
</dbReference>
<dbReference type="GO" id="GO:0035631">
    <property type="term" value="C:CD40 receptor complex"/>
    <property type="evidence" value="ECO:0000314"/>
    <property type="project" value="BHF-UCL"/>
</dbReference>
<dbReference type="GO" id="GO:0005737">
    <property type="term" value="C:cytoplasm"/>
    <property type="evidence" value="ECO:0000304"/>
    <property type="project" value="MGI"/>
</dbReference>
<dbReference type="GO" id="GO:0009898">
    <property type="term" value="C:cytoplasmic side of plasma membrane"/>
    <property type="evidence" value="ECO:0000314"/>
    <property type="project" value="BHF-UCL"/>
</dbReference>
<dbReference type="GO" id="GO:0008385">
    <property type="term" value="C:IkappaB kinase complex"/>
    <property type="evidence" value="ECO:0000314"/>
    <property type="project" value="MGI"/>
</dbReference>
<dbReference type="GO" id="GO:0005634">
    <property type="term" value="C:nucleus"/>
    <property type="evidence" value="ECO:0007669"/>
    <property type="project" value="UniProtKB-SubCell"/>
</dbReference>
<dbReference type="GO" id="GO:0005524">
    <property type="term" value="F:ATP binding"/>
    <property type="evidence" value="ECO:0007669"/>
    <property type="project" value="UniProtKB-KW"/>
</dbReference>
<dbReference type="GO" id="GO:0008384">
    <property type="term" value="F:IkappaB kinase activity"/>
    <property type="evidence" value="ECO:0000314"/>
    <property type="project" value="UniProt"/>
</dbReference>
<dbReference type="GO" id="GO:0046982">
    <property type="term" value="F:protein heterodimerization activity"/>
    <property type="evidence" value="ECO:0000250"/>
    <property type="project" value="UniProtKB"/>
</dbReference>
<dbReference type="GO" id="GO:0042803">
    <property type="term" value="F:protein homodimerization activity"/>
    <property type="evidence" value="ECO:0000250"/>
    <property type="project" value="UniProtKB"/>
</dbReference>
<dbReference type="GO" id="GO:0004672">
    <property type="term" value="F:protein kinase activity"/>
    <property type="evidence" value="ECO:0000314"/>
    <property type="project" value="MGI"/>
</dbReference>
<dbReference type="GO" id="GO:0004674">
    <property type="term" value="F:protein serine/threonine kinase activity"/>
    <property type="evidence" value="ECO:0000250"/>
    <property type="project" value="UniProtKB"/>
</dbReference>
<dbReference type="GO" id="GO:0097110">
    <property type="term" value="F:scaffold protein binding"/>
    <property type="evidence" value="ECO:0000266"/>
    <property type="project" value="MGI"/>
</dbReference>
<dbReference type="GO" id="GO:0007249">
    <property type="term" value="P:canonical NF-kappaB signal transduction"/>
    <property type="evidence" value="ECO:0000314"/>
    <property type="project" value="ComplexPortal"/>
</dbReference>
<dbReference type="GO" id="GO:0071356">
    <property type="term" value="P:cellular response to tumor necrosis factor"/>
    <property type="evidence" value="ECO:0000250"/>
    <property type="project" value="UniProtKB"/>
</dbReference>
<dbReference type="GO" id="GO:0098586">
    <property type="term" value="P:cellular response to virus"/>
    <property type="evidence" value="ECO:0000315"/>
    <property type="project" value="CAFA"/>
</dbReference>
<dbReference type="GO" id="GO:0051607">
    <property type="term" value="P:defense response to virus"/>
    <property type="evidence" value="ECO:0000315"/>
    <property type="project" value="CAFA"/>
</dbReference>
<dbReference type="GO" id="GO:0007229">
    <property type="term" value="P:integrin-mediated signaling pathway"/>
    <property type="evidence" value="ECO:0000314"/>
    <property type="project" value="UniProt"/>
</dbReference>
<dbReference type="GO" id="GO:0007595">
    <property type="term" value="P:lactation"/>
    <property type="evidence" value="ECO:0000315"/>
    <property type="project" value="MGI"/>
</dbReference>
<dbReference type="GO" id="GO:0060749">
    <property type="term" value="P:mammary gland alveolus development"/>
    <property type="evidence" value="ECO:0000315"/>
    <property type="project" value="MGI"/>
</dbReference>
<dbReference type="GO" id="GO:0033598">
    <property type="term" value="P:mammary gland epithelial cell proliferation"/>
    <property type="evidence" value="ECO:0000315"/>
    <property type="project" value="MGI"/>
</dbReference>
<dbReference type="GO" id="GO:0002011">
    <property type="term" value="P:morphogenesis of an epithelial sheet"/>
    <property type="evidence" value="ECO:0000315"/>
    <property type="project" value="MGI"/>
</dbReference>
<dbReference type="GO" id="GO:0042475">
    <property type="term" value="P:odontogenesis of dentin-containing tooth"/>
    <property type="evidence" value="ECO:0000315"/>
    <property type="project" value="MGI"/>
</dbReference>
<dbReference type="GO" id="GO:0030316">
    <property type="term" value="P:osteoclast differentiation"/>
    <property type="evidence" value="ECO:0000315"/>
    <property type="project" value="MGI"/>
</dbReference>
<dbReference type="GO" id="GO:0032727">
    <property type="term" value="P:positive regulation of interferon-alpha production"/>
    <property type="evidence" value="ECO:0000315"/>
    <property type="project" value="CAFA"/>
</dbReference>
<dbReference type="GO" id="GO:0045944">
    <property type="term" value="P:positive regulation of transcription by RNA polymerase II"/>
    <property type="evidence" value="ECO:0000250"/>
    <property type="project" value="UniProtKB"/>
</dbReference>
<dbReference type="GO" id="GO:0035994">
    <property type="term" value="P:response to muscle stretch"/>
    <property type="evidence" value="ECO:0000315"/>
    <property type="project" value="MGI"/>
</dbReference>
<dbReference type="GO" id="GO:0043588">
    <property type="term" value="P:skin development"/>
    <property type="evidence" value="ECO:0000315"/>
    <property type="project" value="MGI"/>
</dbReference>
<dbReference type="GO" id="GO:0033209">
    <property type="term" value="P:tumor necrosis factor-mediated signaling pathway"/>
    <property type="evidence" value="ECO:0000304"/>
    <property type="project" value="MGI"/>
</dbReference>
<dbReference type="CDD" id="cd14039">
    <property type="entry name" value="STKc_IKK_alpha"/>
    <property type="match status" value="1"/>
</dbReference>
<dbReference type="CDD" id="cd17046">
    <property type="entry name" value="Ubl_IKKA_like"/>
    <property type="match status" value="1"/>
</dbReference>
<dbReference type="FunFam" id="1.20.1270.250:FF:000001">
    <property type="entry name" value="Inhibitor of nuclear factor kappa-B kinase subunit alpha"/>
    <property type="match status" value="1"/>
</dbReference>
<dbReference type="FunFam" id="3.10.20.90:FF:000061">
    <property type="entry name" value="Inhibitor of nuclear factor kappa-B kinase subunit alpha"/>
    <property type="match status" value="1"/>
</dbReference>
<dbReference type="FunFam" id="1.10.510.10:FF:000147">
    <property type="entry name" value="Inhibitor of nuclear factor kappa-B kinase subunit beta"/>
    <property type="match status" value="1"/>
</dbReference>
<dbReference type="Gene3D" id="1.20.1270.250">
    <property type="match status" value="1"/>
</dbReference>
<dbReference type="Gene3D" id="6.10.250.2110">
    <property type="match status" value="1"/>
</dbReference>
<dbReference type="Gene3D" id="3.10.20.90">
    <property type="entry name" value="Phosphatidylinositol 3-kinase Catalytic Subunit, Chain A, domain 1"/>
    <property type="match status" value="1"/>
</dbReference>
<dbReference type="Gene3D" id="1.10.510.10">
    <property type="entry name" value="Transferase(Phosphotransferase) domain 1"/>
    <property type="match status" value="1"/>
</dbReference>
<dbReference type="InterPro" id="IPR041185">
    <property type="entry name" value="IKBKB_SDD"/>
</dbReference>
<dbReference type="InterPro" id="IPR046375">
    <property type="entry name" value="IKBKB_SDD_sf"/>
</dbReference>
<dbReference type="InterPro" id="IPR051180">
    <property type="entry name" value="IKK"/>
</dbReference>
<dbReference type="InterPro" id="IPR022007">
    <property type="entry name" value="IKKbetaNEMObind"/>
</dbReference>
<dbReference type="InterPro" id="IPR011009">
    <property type="entry name" value="Kinase-like_dom_sf"/>
</dbReference>
<dbReference type="InterPro" id="IPR000719">
    <property type="entry name" value="Prot_kinase_dom"/>
</dbReference>
<dbReference type="InterPro" id="IPR017441">
    <property type="entry name" value="Protein_kinase_ATP_BS"/>
</dbReference>
<dbReference type="InterPro" id="IPR008271">
    <property type="entry name" value="Ser/Thr_kinase_AS"/>
</dbReference>
<dbReference type="PANTHER" id="PTHR22969">
    <property type="entry name" value="IKB KINASE"/>
    <property type="match status" value="1"/>
</dbReference>
<dbReference type="PANTHER" id="PTHR22969:SF13">
    <property type="entry name" value="INHIBITOR OF NUCLEAR FACTOR KAPPA-B KINASE SUBUNIT ALPHA"/>
    <property type="match status" value="1"/>
</dbReference>
<dbReference type="Pfam" id="PF18397">
    <property type="entry name" value="IKBKB_SDD"/>
    <property type="match status" value="1"/>
</dbReference>
<dbReference type="Pfam" id="PF12179">
    <property type="entry name" value="IKKbetaNEMObind"/>
    <property type="match status" value="1"/>
</dbReference>
<dbReference type="Pfam" id="PF00069">
    <property type="entry name" value="Pkinase"/>
    <property type="match status" value="1"/>
</dbReference>
<dbReference type="SMART" id="SM01239">
    <property type="entry name" value="IKKbetaNEMObind"/>
    <property type="match status" value="1"/>
</dbReference>
<dbReference type="SMART" id="SM00220">
    <property type="entry name" value="S_TKc"/>
    <property type="match status" value="1"/>
</dbReference>
<dbReference type="SUPFAM" id="SSF56112">
    <property type="entry name" value="Protein kinase-like (PK-like)"/>
    <property type="match status" value="1"/>
</dbReference>
<dbReference type="PROSITE" id="PS00107">
    <property type="entry name" value="PROTEIN_KINASE_ATP"/>
    <property type="match status" value="1"/>
</dbReference>
<dbReference type="PROSITE" id="PS50011">
    <property type="entry name" value="PROTEIN_KINASE_DOM"/>
    <property type="match status" value="1"/>
</dbReference>
<dbReference type="PROSITE" id="PS00108">
    <property type="entry name" value="PROTEIN_KINASE_ST"/>
    <property type="match status" value="1"/>
</dbReference>
<proteinExistence type="evidence at protein level"/>
<keyword id="KW-0025">Alternative splicing</keyword>
<keyword id="KW-0067">ATP-binding</keyword>
<keyword id="KW-0963">Cytoplasm</keyword>
<keyword id="KW-0418">Kinase</keyword>
<keyword id="KW-0547">Nucleotide-binding</keyword>
<keyword id="KW-0539">Nucleus</keyword>
<keyword id="KW-0597">Phosphoprotein</keyword>
<keyword id="KW-1185">Reference proteome</keyword>
<keyword id="KW-0723">Serine/threonine-protein kinase</keyword>
<keyword id="KW-0808">Transferase</keyword>
<keyword id="KW-0832">Ubl conjugation</keyword>
<protein>
    <recommendedName>
        <fullName>Inhibitor of nuclear factor kappa-B kinase subunit alpha</fullName>
        <shortName>I-kappa-B kinase alpha</shortName>
        <shortName>IKK-A</shortName>
        <shortName>IKK-alpha</shortName>
        <shortName>IkBKA</shortName>
        <shortName>IkappaB kinase</shortName>
        <ecNumber evidence="1">2.7.11.10</ecNumber>
    </recommendedName>
    <alternativeName>
        <fullName>Conserved helix-loop-helix ubiquitous kinase</fullName>
    </alternativeName>
    <alternativeName>
        <fullName>I-kappa-B kinase 1</fullName>
        <shortName>IKK1</shortName>
    </alternativeName>
    <alternativeName>
        <fullName>Nuclear factor NF-kappa-B inhibitor kinase alpha</fullName>
        <shortName>NFKBIKA</shortName>
    </alternativeName>
</protein>
<evidence type="ECO:0000250" key="1">
    <source>
        <dbReference type="UniProtKB" id="O15111"/>
    </source>
</evidence>
<evidence type="ECO:0000255" key="2">
    <source>
        <dbReference type="PROSITE-ProRule" id="PRU00159"/>
    </source>
</evidence>
<evidence type="ECO:0000255" key="3">
    <source>
        <dbReference type="PROSITE-ProRule" id="PRU10027"/>
    </source>
</evidence>
<evidence type="ECO:0000269" key="4">
    <source>
    </source>
</evidence>
<evidence type="ECO:0000269" key="5">
    <source>
    </source>
</evidence>
<evidence type="ECO:0000269" key="6">
    <source>
    </source>
</evidence>
<evidence type="ECO:0000269" key="7">
    <source>
    </source>
</evidence>
<evidence type="ECO:0000269" key="8">
    <source>
    </source>
</evidence>
<evidence type="ECO:0000269" key="9">
    <source>
    </source>
</evidence>
<evidence type="ECO:0000269" key="10">
    <source>
    </source>
</evidence>
<evidence type="ECO:0000269" key="11">
    <source>
    </source>
</evidence>
<evidence type="ECO:0000303" key="12">
    <source>
    </source>
</evidence>
<evidence type="ECO:0000303" key="13">
    <source>
    </source>
</evidence>
<evidence type="ECO:0000305" key="14"/>